<dbReference type="EMBL" id="AJ719310">
    <property type="protein sequence ID" value="CAG30969.1"/>
    <property type="molecule type" value="mRNA"/>
</dbReference>
<dbReference type="RefSeq" id="NP_001012896.1">
    <property type="nucleotide sequence ID" value="NM_001012878.1"/>
</dbReference>
<dbReference type="SMR" id="Q5ZMS4"/>
<dbReference type="FunCoup" id="Q5ZMS4">
    <property type="interactions" value="1094"/>
</dbReference>
<dbReference type="STRING" id="9031.ENSGALP00000068647"/>
<dbReference type="PaxDb" id="9031-ENSGALP00000031109"/>
<dbReference type="GeneID" id="421717"/>
<dbReference type="KEGG" id="gga:421717"/>
<dbReference type="CTD" id="135112"/>
<dbReference type="VEuPathDB" id="HostDB:geneid_421717"/>
<dbReference type="eggNOG" id="KOG2372">
    <property type="taxonomic scope" value="Eukaryota"/>
</dbReference>
<dbReference type="InParanoid" id="Q5ZMS4"/>
<dbReference type="OrthoDB" id="26679at2759"/>
<dbReference type="PhylomeDB" id="Q5ZMS4"/>
<dbReference type="PRO" id="PR:Q5ZMS4"/>
<dbReference type="Proteomes" id="UP000000539">
    <property type="component" value="Unassembled WGS sequence"/>
</dbReference>
<dbReference type="GO" id="GO:0005634">
    <property type="term" value="C:nucleus"/>
    <property type="evidence" value="ECO:0000318"/>
    <property type="project" value="GO_Central"/>
</dbReference>
<dbReference type="GO" id="GO:0003713">
    <property type="term" value="F:transcription coactivator activity"/>
    <property type="evidence" value="ECO:0000318"/>
    <property type="project" value="GO_Central"/>
</dbReference>
<dbReference type="GO" id="GO:0006357">
    <property type="term" value="P:regulation of transcription by RNA polymerase II"/>
    <property type="evidence" value="ECO:0000318"/>
    <property type="project" value="GO_Central"/>
</dbReference>
<dbReference type="GO" id="GO:0006979">
    <property type="term" value="P:response to oxidative stress"/>
    <property type="evidence" value="ECO:0000318"/>
    <property type="project" value="GO_Central"/>
</dbReference>
<dbReference type="CDD" id="cd00118">
    <property type="entry name" value="LysM"/>
    <property type="match status" value="1"/>
</dbReference>
<dbReference type="Gene3D" id="3.10.350.10">
    <property type="entry name" value="LysM domain"/>
    <property type="match status" value="1"/>
</dbReference>
<dbReference type="InterPro" id="IPR018392">
    <property type="entry name" value="LysM_dom"/>
</dbReference>
<dbReference type="InterPro" id="IPR036779">
    <property type="entry name" value="LysM_dom_sf"/>
</dbReference>
<dbReference type="InterPro" id="IPR006571">
    <property type="entry name" value="TLDc_dom"/>
</dbReference>
<dbReference type="PANTHER" id="PTHR23354:SF68">
    <property type="entry name" value="NUCLEAR RECEPTOR COACTIVATOR 7"/>
    <property type="match status" value="1"/>
</dbReference>
<dbReference type="PANTHER" id="PTHR23354">
    <property type="entry name" value="NUCLEOLAR PROTEIN 7/ESTROGEN RECEPTOR COACTIVATOR-RELATED"/>
    <property type="match status" value="1"/>
</dbReference>
<dbReference type="Pfam" id="PF01476">
    <property type="entry name" value="LysM"/>
    <property type="match status" value="1"/>
</dbReference>
<dbReference type="Pfam" id="PF07534">
    <property type="entry name" value="TLD"/>
    <property type="match status" value="1"/>
</dbReference>
<dbReference type="SMART" id="SM00257">
    <property type="entry name" value="LysM"/>
    <property type="match status" value="1"/>
</dbReference>
<dbReference type="SMART" id="SM00584">
    <property type="entry name" value="TLDc"/>
    <property type="match status" value="1"/>
</dbReference>
<dbReference type="SUPFAM" id="SSF54106">
    <property type="entry name" value="LysM domain"/>
    <property type="match status" value="1"/>
</dbReference>
<dbReference type="PROSITE" id="PS51782">
    <property type="entry name" value="LYSM"/>
    <property type="match status" value="1"/>
</dbReference>
<dbReference type="PROSITE" id="PS51886">
    <property type="entry name" value="TLDC"/>
    <property type="match status" value="1"/>
</dbReference>
<proteinExistence type="evidence at transcript level"/>
<comment type="function">
    <text evidence="1">Enhances the transcriptional activities of several nuclear receptors.</text>
</comment>
<comment type="subcellular location">
    <subcellularLocation>
        <location evidence="1">Nucleus</location>
    </subcellularLocation>
</comment>
<comment type="similarity">
    <text evidence="6">Belongs to the OXR1 family.</text>
</comment>
<organism>
    <name type="scientific">Gallus gallus</name>
    <name type="common">Chicken</name>
    <dbReference type="NCBI Taxonomy" id="9031"/>
    <lineage>
        <taxon>Eukaryota</taxon>
        <taxon>Metazoa</taxon>
        <taxon>Chordata</taxon>
        <taxon>Craniata</taxon>
        <taxon>Vertebrata</taxon>
        <taxon>Euteleostomi</taxon>
        <taxon>Archelosauria</taxon>
        <taxon>Archosauria</taxon>
        <taxon>Dinosauria</taxon>
        <taxon>Saurischia</taxon>
        <taxon>Theropoda</taxon>
        <taxon>Coelurosauria</taxon>
        <taxon>Aves</taxon>
        <taxon>Neognathae</taxon>
        <taxon>Galloanserae</taxon>
        <taxon>Galliformes</taxon>
        <taxon>Phasianidae</taxon>
        <taxon>Phasianinae</taxon>
        <taxon>Gallus</taxon>
    </lineage>
</organism>
<reference key="1">
    <citation type="journal article" date="2005" name="Genome Biol.">
        <title>Full-length cDNAs from chicken bursal lymphocytes to facilitate gene function analysis.</title>
        <authorList>
            <person name="Caldwell R.B."/>
            <person name="Kierzek A.M."/>
            <person name="Arakawa H."/>
            <person name="Bezzubov Y."/>
            <person name="Zaim J."/>
            <person name="Fiedler P."/>
            <person name="Kutter S."/>
            <person name="Blagodatski A."/>
            <person name="Kostovska D."/>
            <person name="Koter M."/>
            <person name="Plachy J."/>
            <person name="Carninci P."/>
            <person name="Hayashizaki Y."/>
            <person name="Buerstedde J.-M."/>
        </authorList>
    </citation>
    <scope>NUCLEOTIDE SEQUENCE [LARGE SCALE MRNA]</scope>
    <source>
        <strain>CB</strain>
        <tissue>Bursa of Fabricius</tissue>
    </source>
</reference>
<evidence type="ECO:0000250" key="1"/>
<evidence type="ECO:0000255" key="2"/>
<evidence type="ECO:0000255" key="3">
    <source>
        <dbReference type="PROSITE-ProRule" id="PRU01118"/>
    </source>
</evidence>
<evidence type="ECO:0000255" key="4">
    <source>
        <dbReference type="PROSITE-ProRule" id="PRU01234"/>
    </source>
</evidence>
<evidence type="ECO:0000256" key="5">
    <source>
        <dbReference type="SAM" id="MobiDB-lite"/>
    </source>
</evidence>
<evidence type="ECO:0000305" key="6"/>
<name>NCOA7_CHICK</name>
<feature type="chain" id="PRO_0000245231" description="Nuclear receptor coactivator 7">
    <location>
        <begin position="1"/>
        <end position="907"/>
    </location>
</feature>
<feature type="domain" description="LysM" evidence="3">
    <location>
        <begin position="125"/>
        <end position="168"/>
    </location>
</feature>
<feature type="domain" description="TLDc" evidence="4">
    <location>
        <begin position="746"/>
        <end position="907"/>
    </location>
</feature>
<feature type="region of interest" description="Disordered" evidence="5">
    <location>
        <begin position="1"/>
        <end position="51"/>
    </location>
</feature>
<feature type="region of interest" description="Disordered" evidence="5">
    <location>
        <begin position="63"/>
        <end position="83"/>
    </location>
</feature>
<feature type="region of interest" description="Disordered" evidence="5">
    <location>
        <begin position="99"/>
        <end position="121"/>
    </location>
</feature>
<feature type="region of interest" description="Disordered" evidence="5">
    <location>
        <begin position="335"/>
        <end position="373"/>
    </location>
</feature>
<feature type="region of interest" description="Disordered" evidence="5">
    <location>
        <begin position="401"/>
        <end position="443"/>
    </location>
</feature>
<feature type="coiled-coil region" evidence="2">
    <location>
        <begin position="1"/>
        <end position="29"/>
    </location>
</feature>
<feature type="compositionally biased region" description="Basic and acidic residues" evidence="5">
    <location>
        <begin position="1"/>
        <end position="12"/>
    </location>
</feature>
<feature type="compositionally biased region" description="Polar residues" evidence="5">
    <location>
        <begin position="25"/>
        <end position="41"/>
    </location>
</feature>
<feature type="compositionally biased region" description="Basic and acidic residues" evidence="5">
    <location>
        <begin position="68"/>
        <end position="78"/>
    </location>
</feature>
<feature type="compositionally biased region" description="Basic and acidic residues" evidence="5">
    <location>
        <begin position="99"/>
        <end position="116"/>
    </location>
</feature>
<feature type="compositionally biased region" description="Basic and acidic residues" evidence="5">
    <location>
        <begin position="401"/>
        <end position="422"/>
    </location>
</feature>
<sequence>METKEEKKERRQGYFARLKKKRQAKQNTETVSANSPGSPVSKTPAEKDDESKVILEQISSSGDNCKFAGEKETVPEKEKRKKKYNQLKDIRRTELKRYYSTDDNQNKTNEKKEKKMVSQKPHGTIEYTAGNQDTINSIALKFNITPNKLVELNKLFTHTIVPGQILFVPETSVARLPSFSPGAPISPSSSDAEYDKLPDADLARKAFKPVERVLSSTSEEDEPVVVKFLKMNCRYFTDGKGVVGGVMIVTPNNIMFDPHKSDPLVIENGCEEYGLICPMEEVVSIALYNDISHMKIKDALPSDIPKDLCPLYRPGEWEDLSSEKDINPFSKFKSLSKEKRQQNGDSPNVPGAKQINPSDKEKSADFEVLQSSESTGSIKSKSLEFYNNITATEHLEKFAADPHVKEPSEEKNVSDIRTKEDSLSGGGDDFIDLEKVPSPMDRGLDRKISLMEGLLADPRELGRTKQQVTKPTTEVQEHFTVDSLEKKDSVEPKADLDLELCEKQDVIPEVNKCVSSPTGKVETALDTKKELEKDKLIEFYLNKDGSGSQSSEDLHKAEIQKGENNKAIGIDLTLSCSKSQADEVHTVKSMELDSCCVGRKAASLESSAAAAEEKDLKESLDSSLVPAVDKTCQETQLDNQSEVRLWLLQKIQVPIEDMLPSKEEKSKTPPMFLCIKVGKPMRKSFVSQSTTVSQQYSKKIKQPEYWFAVPREIITVEEAKRRKSVCSYYGEEDDDDALPVLKHHSALLENMHIEQLARRLPARVQGYPWRLAYSTLEHGTSLKTLYRKSASLDSPVLLVIKDMDNQIFGAYATHPFRFSDHYYGTGETFLYTFSPNFKVFKWSGENTYFINGDMTSLELGGGGGRFGLWLDADLYHGRSNSCSTFNNDILSKKEDFIIQDVEVWTFE</sequence>
<keyword id="KW-0010">Activator</keyword>
<keyword id="KW-0175">Coiled coil</keyword>
<keyword id="KW-0539">Nucleus</keyword>
<keyword id="KW-1185">Reference proteome</keyword>
<keyword id="KW-0804">Transcription</keyword>
<keyword id="KW-0805">Transcription regulation</keyword>
<accession>Q5ZMS4</accession>
<protein>
    <recommendedName>
        <fullName>Nuclear receptor coactivator 7</fullName>
    </recommendedName>
</protein>
<gene>
    <name type="primary">NCOA7</name>
    <name type="ORF">RCJMB04_1f5</name>
</gene>